<protein>
    <recommendedName>
        <fullName evidence="1">tRNA uridine 5-carboxymethylaminomethyl modification enzyme MnmG</fullName>
    </recommendedName>
    <alternativeName>
        <fullName evidence="1">Glucose-inhibited division protein A</fullName>
    </alternativeName>
</protein>
<evidence type="ECO:0000255" key="1">
    <source>
        <dbReference type="HAMAP-Rule" id="MF_00129"/>
    </source>
</evidence>
<gene>
    <name evidence="1" type="primary">mnmG</name>
    <name evidence="1" type="synonym">gidA</name>
    <name type="ordered locus">SynRCC307_2399</name>
</gene>
<keyword id="KW-0963">Cytoplasm</keyword>
<keyword id="KW-0274">FAD</keyword>
<keyword id="KW-0285">Flavoprotein</keyword>
<keyword id="KW-0520">NAD</keyword>
<keyword id="KW-1185">Reference proteome</keyword>
<keyword id="KW-0819">tRNA processing</keyword>
<feature type="chain" id="PRO_1000016700" description="tRNA uridine 5-carboxymethylaminomethyl modification enzyme MnmG">
    <location>
        <begin position="1"/>
        <end position="643"/>
    </location>
</feature>
<feature type="binding site" evidence="1">
    <location>
        <begin position="17"/>
        <end position="22"/>
    </location>
    <ligand>
        <name>FAD</name>
        <dbReference type="ChEBI" id="CHEBI:57692"/>
    </ligand>
</feature>
<feature type="binding site" evidence="1">
    <location>
        <begin position="283"/>
        <end position="297"/>
    </location>
    <ligand>
        <name>NAD(+)</name>
        <dbReference type="ChEBI" id="CHEBI:57540"/>
    </ligand>
</feature>
<sequence length="643" mass="70351">MEPAALPTESFELIVVGGGHAGCEAALTAARLGISTALFSLNLDRIAWQPCNPAVGGPAKSQLVHEVDALGGVIGRLADATALQKRVLNASRGPAVWALRAQTDKRQYARQMLQLLQHTPNLALREAMVTGLETSGSAESGDLRITGVRTYFGSIYNAQAVVLTTGTFLGGRIWVGNQSMPAGRAGEQPAEGLTEALQALGFATDRLKTGTPARVDRRSVALETLEEQPSDAHERWFSFDPEAWVSSEPMSCHITRTTAATHQLIKDNLHLTPIYGGFIDSKGPRYCPSIEDKIVRFADKDSHQIFLEPEGRDTPELYIQGFSTGLPERLQLKLLRTLPGLEQCVMLRPAYNVEYDYLPATQLLPSLQTKRVAGLFSAGQLNGTTGYEEAAAQGLVAGLNAVRLIRGQTPVHFPREGSYIGTLIDDLVTKDLREPYRVLTSRSEYRLVLRGDNADRRLTPLARELGLIDARRWQIYERKQEGIAAETKRLETVRLKVSDPVAPAVVEQTGAAIKGSITLADLLRRPGFHSNDLVRHGLADGELPVDVREGAEIDVKYSGYLARQTQQIERVQRQGQRLIPSGIDFYSITTLSREARERLTAAQPLNLGQASRLPGVSPADVTALLLWLELQDRQAATTTLARP</sequence>
<comment type="function">
    <text evidence="1">NAD-binding protein involved in the addition of a carboxymethylaminomethyl (cmnm) group at the wobble position (U34) of certain tRNAs, forming tRNA-cmnm(5)s(2)U34.</text>
</comment>
<comment type="cofactor">
    <cofactor evidence="1">
        <name>FAD</name>
        <dbReference type="ChEBI" id="CHEBI:57692"/>
    </cofactor>
</comment>
<comment type="subunit">
    <text evidence="1">Homodimer. Heterotetramer of two MnmE and two MnmG subunits.</text>
</comment>
<comment type="subcellular location">
    <subcellularLocation>
        <location evidence="1">Cytoplasm</location>
    </subcellularLocation>
</comment>
<comment type="similarity">
    <text evidence="1">Belongs to the MnmG family.</text>
</comment>
<dbReference type="EMBL" id="CT978603">
    <property type="protein sequence ID" value="CAK29302.1"/>
    <property type="molecule type" value="Genomic_DNA"/>
</dbReference>
<dbReference type="SMR" id="A5GWP3"/>
<dbReference type="STRING" id="316278.SynRCC307_2399"/>
<dbReference type="KEGG" id="syr:SynRCC307_2399"/>
<dbReference type="eggNOG" id="COG0445">
    <property type="taxonomic scope" value="Bacteria"/>
</dbReference>
<dbReference type="HOGENOM" id="CLU_007831_2_2_3"/>
<dbReference type="OrthoDB" id="9815560at2"/>
<dbReference type="Proteomes" id="UP000001115">
    <property type="component" value="Chromosome"/>
</dbReference>
<dbReference type="GO" id="GO:0005737">
    <property type="term" value="C:cytoplasm"/>
    <property type="evidence" value="ECO:0007669"/>
    <property type="project" value="UniProtKB-SubCell"/>
</dbReference>
<dbReference type="GO" id="GO:0050660">
    <property type="term" value="F:flavin adenine dinucleotide binding"/>
    <property type="evidence" value="ECO:0007669"/>
    <property type="project" value="UniProtKB-UniRule"/>
</dbReference>
<dbReference type="GO" id="GO:0030488">
    <property type="term" value="P:tRNA methylation"/>
    <property type="evidence" value="ECO:0007669"/>
    <property type="project" value="TreeGrafter"/>
</dbReference>
<dbReference type="GO" id="GO:0002098">
    <property type="term" value="P:tRNA wobble uridine modification"/>
    <property type="evidence" value="ECO:0007669"/>
    <property type="project" value="InterPro"/>
</dbReference>
<dbReference type="FunFam" id="1.10.150.570:FF:000001">
    <property type="entry name" value="tRNA uridine 5-carboxymethylaminomethyl modification enzyme MnmG"/>
    <property type="match status" value="1"/>
</dbReference>
<dbReference type="FunFam" id="3.50.50.60:FF:000094">
    <property type="entry name" value="tRNA uridine 5-carboxymethylaminomethyl modification enzyme MnmG"/>
    <property type="match status" value="1"/>
</dbReference>
<dbReference type="FunFam" id="3.50.50.60:FF:000119">
    <property type="entry name" value="tRNA uridine 5-carboxymethylaminomethyl modification enzyme MnmG"/>
    <property type="match status" value="1"/>
</dbReference>
<dbReference type="Gene3D" id="3.50.50.60">
    <property type="entry name" value="FAD/NAD(P)-binding domain"/>
    <property type="match status" value="2"/>
</dbReference>
<dbReference type="Gene3D" id="1.10.150.570">
    <property type="entry name" value="GidA associated domain, C-terminal subdomain"/>
    <property type="match status" value="1"/>
</dbReference>
<dbReference type="Gene3D" id="1.10.10.1800">
    <property type="entry name" value="tRNA uridine 5-carboxymethylaminomethyl modification enzyme MnmG/GidA"/>
    <property type="match status" value="1"/>
</dbReference>
<dbReference type="HAMAP" id="MF_00129">
    <property type="entry name" value="MnmG_GidA"/>
    <property type="match status" value="1"/>
</dbReference>
<dbReference type="InterPro" id="IPR036188">
    <property type="entry name" value="FAD/NAD-bd_sf"/>
</dbReference>
<dbReference type="InterPro" id="IPR049312">
    <property type="entry name" value="GIDA_C_N"/>
</dbReference>
<dbReference type="InterPro" id="IPR004416">
    <property type="entry name" value="MnmG"/>
</dbReference>
<dbReference type="InterPro" id="IPR002218">
    <property type="entry name" value="MnmG-rel"/>
</dbReference>
<dbReference type="InterPro" id="IPR020595">
    <property type="entry name" value="MnmG-rel_CS"/>
</dbReference>
<dbReference type="InterPro" id="IPR026904">
    <property type="entry name" value="MnmG_C"/>
</dbReference>
<dbReference type="InterPro" id="IPR047001">
    <property type="entry name" value="MnmG_C_subdom"/>
</dbReference>
<dbReference type="InterPro" id="IPR044920">
    <property type="entry name" value="MnmG_C_subdom_sf"/>
</dbReference>
<dbReference type="InterPro" id="IPR040131">
    <property type="entry name" value="MnmG_N"/>
</dbReference>
<dbReference type="NCBIfam" id="TIGR00136">
    <property type="entry name" value="mnmG_gidA"/>
    <property type="match status" value="1"/>
</dbReference>
<dbReference type="PANTHER" id="PTHR11806">
    <property type="entry name" value="GLUCOSE INHIBITED DIVISION PROTEIN A"/>
    <property type="match status" value="1"/>
</dbReference>
<dbReference type="PANTHER" id="PTHR11806:SF0">
    <property type="entry name" value="PROTEIN MTO1 HOMOLOG, MITOCHONDRIAL"/>
    <property type="match status" value="1"/>
</dbReference>
<dbReference type="Pfam" id="PF01134">
    <property type="entry name" value="GIDA"/>
    <property type="match status" value="1"/>
</dbReference>
<dbReference type="Pfam" id="PF21680">
    <property type="entry name" value="GIDA_C_1st"/>
    <property type="match status" value="1"/>
</dbReference>
<dbReference type="Pfam" id="PF13932">
    <property type="entry name" value="SAM_GIDA_C"/>
    <property type="match status" value="1"/>
</dbReference>
<dbReference type="SMART" id="SM01228">
    <property type="entry name" value="GIDA_assoc_3"/>
    <property type="match status" value="1"/>
</dbReference>
<dbReference type="SUPFAM" id="SSF51905">
    <property type="entry name" value="FAD/NAD(P)-binding domain"/>
    <property type="match status" value="1"/>
</dbReference>
<dbReference type="PROSITE" id="PS01280">
    <property type="entry name" value="GIDA_1"/>
    <property type="match status" value="1"/>
</dbReference>
<dbReference type="PROSITE" id="PS01281">
    <property type="entry name" value="GIDA_2"/>
    <property type="match status" value="1"/>
</dbReference>
<reference key="1">
    <citation type="submission" date="2006-05" db="EMBL/GenBank/DDBJ databases">
        <authorList>
            <consortium name="Genoscope"/>
        </authorList>
    </citation>
    <scope>NUCLEOTIDE SEQUENCE [LARGE SCALE GENOMIC DNA]</scope>
    <source>
        <strain>RCC307</strain>
    </source>
</reference>
<proteinExistence type="inferred from homology"/>
<accession>A5GWP3</accession>
<organism>
    <name type="scientific">Synechococcus sp. (strain RCC307)</name>
    <dbReference type="NCBI Taxonomy" id="316278"/>
    <lineage>
        <taxon>Bacteria</taxon>
        <taxon>Bacillati</taxon>
        <taxon>Cyanobacteriota</taxon>
        <taxon>Cyanophyceae</taxon>
        <taxon>Synechococcales</taxon>
        <taxon>Synechococcaceae</taxon>
        <taxon>Synechococcus</taxon>
    </lineage>
</organism>
<name>MNMG_SYNR3</name>